<accession>Q1ZXJ0</accession>
<feature type="chain" id="PRO_0000328046" description="Chloride channel protein D">
    <location>
        <begin position="1"/>
        <end position="1000"/>
    </location>
</feature>
<feature type="topological domain" description="Cytoplasmic" evidence="2">
    <location>
        <begin position="1"/>
        <end position="256"/>
    </location>
</feature>
<feature type="transmembrane region" description="Helical" evidence="2">
    <location>
        <begin position="257"/>
        <end position="277"/>
    </location>
</feature>
<feature type="transmembrane region" description="Helical" evidence="2">
    <location>
        <begin position="290"/>
        <end position="310"/>
    </location>
</feature>
<feature type="transmembrane region" description="Helical" evidence="2">
    <location>
        <begin position="416"/>
        <end position="436"/>
    </location>
</feature>
<feature type="transmembrane region" description="Helical" evidence="2">
    <location>
        <begin position="442"/>
        <end position="462"/>
    </location>
</feature>
<feature type="transmembrane region" description="Helical" evidence="2">
    <location>
        <begin position="493"/>
        <end position="513"/>
    </location>
</feature>
<feature type="transmembrane region" description="Helical" evidence="2">
    <location>
        <begin position="534"/>
        <end position="554"/>
    </location>
</feature>
<feature type="transmembrane region" description="Helical" evidence="2">
    <location>
        <begin position="678"/>
        <end position="698"/>
    </location>
</feature>
<feature type="transmembrane region" description="Helical" evidence="2">
    <location>
        <begin position="710"/>
        <end position="730"/>
    </location>
</feature>
<feature type="transmembrane region" description="Helical" evidence="2">
    <location>
        <begin position="733"/>
        <end position="753"/>
    </location>
</feature>
<feature type="transmembrane region" description="Helical" evidence="2">
    <location>
        <begin position="772"/>
        <end position="792"/>
    </location>
</feature>
<feature type="domain" description="CBS 1" evidence="3">
    <location>
        <begin position="824"/>
        <end position="881"/>
    </location>
</feature>
<feature type="domain" description="CBS 2" evidence="3">
    <location>
        <begin position="926"/>
        <end position="984"/>
    </location>
</feature>
<feature type="region of interest" description="Disordered" evidence="4">
    <location>
        <begin position="1"/>
        <end position="90"/>
    </location>
</feature>
<feature type="compositionally biased region" description="Low complexity" evidence="4">
    <location>
        <begin position="1"/>
        <end position="16"/>
    </location>
</feature>
<feature type="compositionally biased region" description="Low complexity" evidence="4">
    <location>
        <begin position="38"/>
        <end position="60"/>
    </location>
</feature>
<feature type="compositionally biased region" description="Basic and acidic residues" evidence="4">
    <location>
        <begin position="71"/>
        <end position="80"/>
    </location>
</feature>
<comment type="function">
    <text evidence="1 5">Voltage-gated chloride channel. Chloride channels may have several functions including the regulation of cell volume, membrane potential stabilization and signal transduction (By similarity). Required for normal aggregation.</text>
</comment>
<comment type="subcellular location">
    <subcellularLocation>
        <location evidence="1">Membrane</location>
        <topology evidence="1">Multi-pass membrane protein</topology>
    </subcellularLocation>
</comment>
<comment type="disruption phenotype">
    <text evidence="5">Cells display slow oscillators with delayed aggregation.</text>
</comment>
<comment type="similarity">
    <text evidence="6">Belongs to the chloride channel (TC 2.A.49) family.</text>
</comment>
<protein>
    <recommendedName>
        <fullName>Chloride channel protein D</fullName>
    </recommendedName>
</protein>
<proteinExistence type="inferred from homology"/>
<sequence length="1000" mass="112657">MSSGNPFDNGNPNDGNKSPSIDELYSPSESLARDGDDNNNNNNNNNNNNNNNNNNNNSSVSEKKKSKKKVRIQEEERLTESYDDDGDDEERRAYIENEEGEEEETEDGIILQPIVRDHSTYRPKNLYGSSDDIREGDSFGAKVSKTFGKTNKKIKQKIGESNKKIETRVKHSNKAIEEGWKTIAQTTMKPVDNIREQHHRRAEQHEVAERAVWFKDKLQIQKYECLDYVTIYNKAHRNELYKNFSKLASDHEVLRWIVSLFMGIFIGVIAYFSHACVSNITKYKFKFVEAVLELDLFLAFLTYFLLNTLLATCSSLLAVYYEPTAAGSGIPEVKGYLNGTKIPHTLKMKTLWTKFLSMVLAVSSGLQAGSEGPMIHIGAIVGNGFSQAQSKEFGFKIPFLRSFRNDKDKRDFVTSGAGAGVAAAFSAPLGGTLFSLEEVSSFWSIALTWRAFFCCMVATYTMNVLQSNSGSLTGLIIFNTGIGDKESYNWFEIIPFLLIGVLGGLGGALFTWINVKVTEFRREKINKIKSLRVLEVFLIIGLSTCIQFFLPLFFSCQNTAPFIPSVGNSTLTDVTLTNGAFYNSTIINGTFYNSTIANGTIYNSKFYNSSIYNSTITNGTGVSYDPAETLKELSEFKRFNCKEGWYNPMATLIFASYEESITNLLKVNSNNVTNTERLGLWPMFLFCIFYLFFAAYTAGCAVATGTLVPMLVIGASYGRFVGLVVYHILGDKVSIDPGIYAVMGAAAFMGGVSRLTISLTVILIEITDRLKYLLPLMLTVMTAKWVADALIHPLFDLLMQMKYIPYLELDQSKEMKLMMCKHIMAKKPVYLAEKDTLGNLRVLKETRHNGFPVVNNDEEKLVKGLILRTQLLMILERISDVYIPNSEAIYSHIEYTTKLTWKLPSVNDFNFDPADYSQEIDLSDVMNLTVITVNVEFAVSEAFQLFRTMGLRHMPVVNENNKLKGIITKKDLLEKTCEQRYRELNHMKLGIDQLIHVGDE</sequence>
<reference key="1">
    <citation type="journal article" date="2005" name="Nature">
        <title>The genome of the social amoeba Dictyostelium discoideum.</title>
        <authorList>
            <person name="Eichinger L."/>
            <person name="Pachebat J.A."/>
            <person name="Gloeckner G."/>
            <person name="Rajandream M.A."/>
            <person name="Sucgang R."/>
            <person name="Berriman M."/>
            <person name="Song J."/>
            <person name="Olsen R."/>
            <person name="Szafranski K."/>
            <person name="Xu Q."/>
            <person name="Tunggal B."/>
            <person name="Kummerfeld S."/>
            <person name="Madera M."/>
            <person name="Konfortov B.A."/>
            <person name="Rivero F."/>
            <person name="Bankier A.T."/>
            <person name="Lehmann R."/>
            <person name="Hamlin N."/>
            <person name="Davies R."/>
            <person name="Gaudet P."/>
            <person name="Fey P."/>
            <person name="Pilcher K."/>
            <person name="Chen G."/>
            <person name="Saunders D."/>
            <person name="Sodergren E.J."/>
            <person name="Davis P."/>
            <person name="Kerhornou A."/>
            <person name="Nie X."/>
            <person name="Hall N."/>
            <person name="Anjard C."/>
            <person name="Hemphill L."/>
            <person name="Bason N."/>
            <person name="Farbrother P."/>
            <person name="Desany B."/>
            <person name="Just E."/>
            <person name="Morio T."/>
            <person name="Rost R."/>
            <person name="Churcher C.M."/>
            <person name="Cooper J."/>
            <person name="Haydock S."/>
            <person name="van Driessche N."/>
            <person name="Cronin A."/>
            <person name="Goodhead I."/>
            <person name="Muzny D.M."/>
            <person name="Mourier T."/>
            <person name="Pain A."/>
            <person name="Lu M."/>
            <person name="Harper D."/>
            <person name="Lindsay R."/>
            <person name="Hauser H."/>
            <person name="James K.D."/>
            <person name="Quiles M."/>
            <person name="Madan Babu M."/>
            <person name="Saito T."/>
            <person name="Buchrieser C."/>
            <person name="Wardroper A."/>
            <person name="Felder M."/>
            <person name="Thangavelu M."/>
            <person name="Johnson D."/>
            <person name="Knights A."/>
            <person name="Loulseged H."/>
            <person name="Mungall K.L."/>
            <person name="Oliver K."/>
            <person name="Price C."/>
            <person name="Quail M.A."/>
            <person name="Urushihara H."/>
            <person name="Hernandez J."/>
            <person name="Rabbinowitsch E."/>
            <person name="Steffen D."/>
            <person name="Sanders M."/>
            <person name="Ma J."/>
            <person name="Kohara Y."/>
            <person name="Sharp S."/>
            <person name="Simmonds M.N."/>
            <person name="Spiegler S."/>
            <person name="Tivey A."/>
            <person name="Sugano S."/>
            <person name="White B."/>
            <person name="Walker D."/>
            <person name="Woodward J.R."/>
            <person name="Winckler T."/>
            <person name="Tanaka Y."/>
            <person name="Shaulsky G."/>
            <person name="Schleicher M."/>
            <person name="Weinstock G.M."/>
            <person name="Rosenthal A."/>
            <person name="Cox E.C."/>
            <person name="Chisholm R.L."/>
            <person name="Gibbs R.A."/>
            <person name="Loomis W.F."/>
            <person name="Platzer M."/>
            <person name="Kay R.R."/>
            <person name="Williams J.G."/>
            <person name="Dear P.H."/>
            <person name="Noegel A.A."/>
            <person name="Barrell B.G."/>
            <person name="Kuspa A."/>
        </authorList>
    </citation>
    <scope>NUCLEOTIDE SEQUENCE [LARGE SCALE GENOMIC DNA]</scope>
    <source>
        <strain>AX4</strain>
    </source>
</reference>
<reference key="2">
    <citation type="journal article" date="2007" name="Genome Biol.">
        <title>High-throughput analysis of spatio-temporal dynamics in Dictyostelium.</title>
        <authorList>
            <person name="Sawai S."/>
            <person name="Guan X.-J."/>
            <person name="Kuspa A."/>
            <person name="Cox E.C."/>
        </authorList>
    </citation>
    <scope>FUNCTION</scope>
    <scope>DISRUPTION PHENOTYPE</scope>
</reference>
<keyword id="KW-0129">CBS domain</keyword>
<keyword id="KW-0868">Chloride</keyword>
<keyword id="KW-0869">Chloride channel</keyword>
<keyword id="KW-0407">Ion channel</keyword>
<keyword id="KW-0406">Ion transport</keyword>
<keyword id="KW-0472">Membrane</keyword>
<keyword id="KW-1185">Reference proteome</keyword>
<keyword id="KW-0677">Repeat</keyword>
<keyword id="KW-0812">Transmembrane</keyword>
<keyword id="KW-1133">Transmembrane helix</keyword>
<keyword id="KW-0813">Transport</keyword>
<keyword id="KW-0851">Voltage-gated channel</keyword>
<organism>
    <name type="scientific">Dictyostelium discoideum</name>
    <name type="common">Social amoeba</name>
    <dbReference type="NCBI Taxonomy" id="44689"/>
    <lineage>
        <taxon>Eukaryota</taxon>
        <taxon>Amoebozoa</taxon>
        <taxon>Evosea</taxon>
        <taxon>Eumycetozoa</taxon>
        <taxon>Dictyostelia</taxon>
        <taxon>Dictyosteliales</taxon>
        <taxon>Dictyosteliaceae</taxon>
        <taxon>Dictyostelium</taxon>
    </lineage>
</organism>
<name>CLCD_DICDI</name>
<gene>
    <name type="primary">clcD</name>
    <name type="ORF">DDB_G0278639</name>
</gene>
<dbReference type="EMBL" id="AAFI02000023">
    <property type="protein sequence ID" value="EAS66897.1"/>
    <property type="molecule type" value="Genomic_DNA"/>
</dbReference>
<dbReference type="RefSeq" id="XP_001134581.3">
    <property type="nucleotide sequence ID" value="XM_001134581.2"/>
</dbReference>
<dbReference type="SMR" id="Q1ZXJ0"/>
<dbReference type="FunCoup" id="Q1ZXJ0">
    <property type="interactions" value="274"/>
</dbReference>
<dbReference type="STRING" id="44689.Q1ZXJ0"/>
<dbReference type="PaxDb" id="44689-DDB0233313"/>
<dbReference type="GeneID" id="8621440"/>
<dbReference type="KEGG" id="ddi:DDB_G0278639"/>
<dbReference type="dictyBase" id="DDB_G0278639">
    <property type="gene designation" value="clcD"/>
</dbReference>
<dbReference type="VEuPathDB" id="AmoebaDB:DDB_G0278639"/>
<dbReference type="eggNOG" id="KOG0474">
    <property type="taxonomic scope" value="Eukaryota"/>
</dbReference>
<dbReference type="HOGENOM" id="CLU_003181_4_1_1"/>
<dbReference type="InParanoid" id="Q1ZXJ0"/>
<dbReference type="OMA" id="YLIRLKW"/>
<dbReference type="PhylomeDB" id="Q1ZXJ0"/>
<dbReference type="Reactome" id="R-DDI-2672351">
    <property type="pathway name" value="Stimuli-sensing channels"/>
</dbReference>
<dbReference type="PRO" id="PR:Q1ZXJ0"/>
<dbReference type="Proteomes" id="UP000002195">
    <property type="component" value="Chromosome 3"/>
</dbReference>
<dbReference type="GO" id="GO:0034707">
    <property type="term" value="C:chloride channel complex"/>
    <property type="evidence" value="ECO:0007669"/>
    <property type="project" value="UniProtKB-KW"/>
</dbReference>
<dbReference type="GO" id="GO:0043231">
    <property type="term" value="C:intracellular membrane-bounded organelle"/>
    <property type="evidence" value="ECO:0000318"/>
    <property type="project" value="GO_Central"/>
</dbReference>
<dbReference type="GO" id="GO:0005254">
    <property type="term" value="F:chloride channel activity"/>
    <property type="evidence" value="ECO:0007669"/>
    <property type="project" value="UniProtKB-KW"/>
</dbReference>
<dbReference type="GO" id="GO:0015108">
    <property type="term" value="F:chloride transmembrane transporter activity"/>
    <property type="evidence" value="ECO:0000318"/>
    <property type="project" value="GO_Central"/>
</dbReference>
<dbReference type="GO" id="GO:0030587">
    <property type="term" value="P:sorocarp development"/>
    <property type="evidence" value="ECO:0007001"/>
    <property type="project" value="dictyBase"/>
</dbReference>
<dbReference type="CDD" id="cd04591">
    <property type="entry name" value="CBS_pair_voltage-gated_CLC_euk_bac"/>
    <property type="match status" value="1"/>
</dbReference>
<dbReference type="CDD" id="cd03685">
    <property type="entry name" value="ClC_6_like"/>
    <property type="match status" value="1"/>
</dbReference>
<dbReference type="FunFam" id="3.10.580.10:FF:000114">
    <property type="entry name" value="Chloride channel protein"/>
    <property type="match status" value="1"/>
</dbReference>
<dbReference type="Gene3D" id="3.10.580.10">
    <property type="entry name" value="CBS-domain"/>
    <property type="match status" value="2"/>
</dbReference>
<dbReference type="Gene3D" id="1.10.3080.10">
    <property type="entry name" value="Clc chloride channel"/>
    <property type="match status" value="1"/>
</dbReference>
<dbReference type="InterPro" id="IPR000644">
    <property type="entry name" value="CBS_dom"/>
</dbReference>
<dbReference type="InterPro" id="IPR046342">
    <property type="entry name" value="CBS_dom_sf"/>
</dbReference>
<dbReference type="InterPro" id="IPR051280">
    <property type="entry name" value="Cl-channel/antiporter"/>
</dbReference>
<dbReference type="InterPro" id="IPR014743">
    <property type="entry name" value="Cl-channel_core"/>
</dbReference>
<dbReference type="InterPro" id="IPR001807">
    <property type="entry name" value="ClC"/>
</dbReference>
<dbReference type="PANTHER" id="PTHR11689">
    <property type="entry name" value="CHLORIDE CHANNEL PROTEIN CLC FAMILY MEMBER"/>
    <property type="match status" value="1"/>
</dbReference>
<dbReference type="PANTHER" id="PTHR11689:SF136">
    <property type="entry name" value="H(+)_CL(-) EXCHANGE TRANSPORTER 7"/>
    <property type="match status" value="1"/>
</dbReference>
<dbReference type="Pfam" id="PF00571">
    <property type="entry name" value="CBS"/>
    <property type="match status" value="2"/>
</dbReference>
<dbReference type="Pfam" id="PF00654">
    <property type="entry name" value="Voltage_CLC"/>
    <property type="match status" value="1"/>
</dbReference>
<dbReference type="PRINTS" id="PR00762">
    <property type="entry name" value="CLCHANNEL"/>
</dbReference>
<dbReference type="SMART" id="SM00116">
    <property type="entry name" value="CBS"/>
    <property type="match status" value="2"/>
</dbReference>
<dbReference type="SUPFAM" id="SSF54631">
    <property type="entry name" value="CBS-domain pair"/>
    <property type="match status" value="1"/>
</dbReference>
<dbReference type="SUPFAM" id="SSF81340">
    <property type="entry name" value="Clc chloride channel"/>
    <property type="match status" value="1"/>
</dbReference>
<dbReference type="PROSITE" id="PS51371">
    <property type="entry name" value="CBS"/>
    <property type="match status" value="2"/>
</dbReference>
<evidence type="ECO:0000250" key="1"/>
<evidence type="ECO:0000255" key="2"/>
<evidence type="ECO:0000255" key="3">
    <source>
        <dbReference type="PROSITE-ProRule" id="PRU00703"/>
    </source>
</evidence>
<evidence type="ECO:0000256" key="4">
    <source>
        <dbReference type="SAM" id="MobiDB-lite"/>
    </source>
</evidence>
<evidence type="ECO:0000269" key="5">
    <source>
    </source>
</evidence>
<evidence type="ECO:0000305" key="6"/>